<comment type="similarity">
    <text evidence="1">Belongs to the bacterial ribosomal protein bL34 family.</text>
</comment>
<feature type="chain" id="PRO_1000080237" description="Large ribosomal subunit protein bL34">
    <location>
        <begin position="1"/>
        <end position="44"/>
    </location>
</feature>
<feature type="region of interest" description="Disordered" evidence="2">
    <location>
        <begin position="1"/>
        <end position="44"/>
    </location>
</feature>
<feature type="compositionally biased region" description="Basic residues" evidence="2">
    <location>
        <begin position="1"/>
        <end position="19"/>
    </location>
</feature>
<organism>
    <name type="scientific">Acholeplasma laidlawii (strain PG-8A)</name>
    <dbReference type="NCBI Taxonomy" id="441768"/>
    <lineage>
        <taxon>Bacteria</taxon>
        <taxon>Bacillati</taxon>
        <taxon>Mycoplasmatota</taxon>
        <taxon>Mollicutes</taxon>
        <taxon>Acholeplasmatales</taxon>
        <taxon>Acholeplasmataceae</taxon>
        <taxon>Acholeplasma</taxon>
    </lineage>
</organism>
<proteinExistence type="inferred from homology"/>
<keyword id="KW-1185">Reference proteome</keyword>
<keyword id="KW-0687">Ribonucleoprotein</keyword>
<keyword id="KW-0689">Ribosomal protein</keyword>
<name>RL34_ACHLI</name>
<evidence type="ECO:0000255" key="1">
    <source>
        <dbReference type="HAMAP-Rule" id="MF_00391"/>
    </source>
</evidence>
<evidence type="ECO:0000256" key="2">
    <source>
        <dbReference type="SAM" id="MobiDB-lite"/>
    </source>
</evidence>
<evidence type="ECO:0000305" key="3"/>
<dbReference type="EMBL" id="CP000896">
    <property type="protein sequence ID" value="ABX82024.1"/>
    <property type="molecule type" value="Genomic_DNA"/>
</dbReference>
<dbReference type="RefSeq" id="WP_012243355.1">
    <property type="nucleotide sequence ID" value="NC_010163.1"/>
</dbReference>
<dbReference type="SMR" id="A9NE64"/>
<dbReference type="STRING" id="441768.ACL_1433"/>
<dbReference type="GeneID" id="41339560"/>
<dbReference type="KEGG" id="acl:ACL_1433"/>
<dbReference type="eggNOG" id="COG0230">
    <property type="taxonomic scope" value="Bacteria"/>
</dbReference>
<dbReference type="HOGENOM" id="CLU_129938_2_0_14"/>
<dbReference type="OrthoDB" id="9804164at2"/>
<dbReference type="Proteomes" id="UP000008558">
    <property type="component" value="Chromosome"/>
</dbReference>
<dbReference type="GO" id="GO:1990904">
    <property type="term" value="C:ribonucleoprotein complex"/>
    <property type="evidence" value="ECO:0007669"/>
    <property type="project" value="UniProtKB-KW"/>
</dbReference>
<dbReference type="GO" id="GO:0005840">
    <property type="term" value="C:ribosome"/>
    <property type="evidence" value="ECO:0007669"/>
    <property type="project" value="UniProtKB-KW"/>
</dbReference>
<dbReference type="GO" id="GO:0003735">
    <property type="term" value="F:structural constituent of ribosome"/>
    <property type="evidence" value="ECO:0007669"/>
    <property type="project" value="InterPro"/>
</dbReference>
<dbReference type="GO" id="GO:0006412">
    <property type="term" value="P:translation"/>
    <property type="evidence" value="ECO:0007669"/>
    <property type="project" value="UniProtKB-UniRule"/>
</dbReference>
<dbReference type="FunFam" id="1.10.287.3980:FF:000001">
    <property type="entry name" value="Mitochondrial ribosomal protein L34"/>
    <property type="match status" value="1"/>
</dbReference>
<dbReference type="Gene3D" id="1.10.287.3980">
    <property type="match status" value="1"/>
</dbReference>
<dbReference type="HAMAP" id="MF_00391">
    <property type="entry name" value="Ribosomal_bL34"/>
    <property type="match status" value="1"/>
</dbReference>
<dbReference type="InterPro" id="IPR000271">
    <property type="entry name" value="Ribosomal_bL34"/>
</dbReference>
<dbReference type="InterPro" id="IPR020939">
    <property type="entry name" value="Ribosomal_bL34_CS"/>
</dbReference>
<dbReference type="NCBIfam" id="TIGR01030">
    <property type="entry name" value="rpmH_bact"/>
    <property type="match status" value="1"/>
</dbReference>
<dbReference type="PANTHER" id="PTHR14503:SF4">
    <property type="entry name" value="LARGE RIBOSOMAL SUBUNIT PROTEIN BL34M"/>
    <property type="match status" value="1"/>
</dbReference>
<dbReference type="PANTHER" id="PTHR14503">
    <property type="entry name" value="MITOCHONDRIAL RIBOSOMAL PROTEIN 34 FAMILY MEMBER"/>
    <property type="match status" value="1"/>
</dbReference>
<dbReference type="Pfam" id="PF00468">
    <property type="entry name" value="Ribosomal_L34"/>
    <property type="match status" value="1"/>
</dbReference>
<dbReference type="PROSITE" id="PS00784">
    <property type="entry name" value="RIBOSOMAL_L34"/>
    <property type="match status" value="1"/>
</dbReference>
<accession>A9NE64</accession>
<reference key="1">
    <citation type="journal article" date="2011" name="J. Bacteriol.">
        <title>Complete genome and proteome of Acholeplasma laidlawii.</title>
        <authorList>
            <person name="Lazarev V.N."/>
            <person name="Levitskii S.A."/>
            <person name="Basovskii Y.I."/>
            <person name="Chukin M.M."/>
            <person name="Akopian T.A."/>
            <person name="Vereshchagin V.V."/>
            <person name="Kostrjukova E.S."/>
            <person name="Kovaleva G.Y."/>
            <person name="Kazanov M.D."/>
            <person name="Malko D.B."/>
            <person name="Vitreschak A.G."/>
            <person name="Sernova N.V."/>
            <person name="Gelfand M.S."/>
            <person name="Demina I.A."/>
            <person name="Serebryakova M.V."/>
            <person name="Galyamina M.A."/>
            <person name="Vtyurin N.N."/>
            <person name="Rogov S.I."/>
            <person name="Alexeev D.G."/>
            <person name="Ladygina V.G."/>
            <person name="Govorun V.M."/>
        </authorList>
    </citation>
    <scope>NUCLEOTIDE SEQUENCE [LARGE SCALE GENOMIC DNA]</scope>
    <source>
        <strain>PG-8A</strain>
    </source>
</reference>
<sequence length="44" mass="5205">MKRTYQPSKIKHQRRHGFRARMATANGRKVLARRRAKGRQSLTV</sequence>
<gene>
    <name evidence="1" type="primary">rpmH</name>
    <name type="ordered locus">ACL_1433</name>
</gene>
<protein>
    <recommendedName>
        <fullName evidence="1">Large ribosomal subunit protein bL34</fullName>
    </recommendedName>
    <alternativeName>
        <fullName evidence="3">50S ribosomal protein L34</fullName>
    </alternativeName>
</protein>